<comment type="function">
    <text>Cytochrome c2 is found mainly in purple, non-sulfur, photosynthetic bacteria where it functions as the electron donor to the oxidized bacteriochlorophyll in the photophosphorylation pathway. However, it may also have a role in the respiratory chain and is found in some non-photosynthetic bacteria.</text>
</comment>
<comment type="PTM">
    <text>Binds 1 heme c group covalently per subunit.</text>
</comment>
<comment type="similarity">
    <text evidence="1">Belongs to the cytochrome c family.</text>
</comment>
<reference key="1">
    <citation type="journal article" date="1968" name="J. Biol. Chem.">
        <title>Cytochrome c2 of Rhodospirillum rubrum. II. Complete amino acid sequence and phylogenetic relationships.</title>
        <authorList>
            <person name="Dus K."/>
            <person name="Sletten K."/>
            <person name="Kamen M.D."/>
        </authorList>
    </citation>
    <scope>PROTEIN SEQUENCE</scope>
</reference>
<reference key="2">
    <citation type="journal article" date="1973" name="J. Biol. Chem.">
        <title>The structure of oxidized cytochrome c2 of Rhodospirillum rubrum.</title>
        <authorList>
            <person name="Salemme F.R."/>
            <person name="Freer S.T."/>
            <person name="Xuong N.H."/>
            <person name="Alden R.A."/>
            <person name="Kraut J."/>
        </authorList>
    </citation>
    <scope>X-RAY CRYSTALLOGRAPHY (1.68 ANGSTROMS)</scope>
</reference>
<reference key="3">
    <citation type="journal article" date="1973" name="Biochem. Biophys. Res. Commun.">
        <title>Atomic coordinates for ferricytochrome c2 of Rhodospirillum rubrum.</title>
        <authorList>
            <person name="Salemme F.R."/>
            <person name="Freer S.T."/>
            <person name="Alden R.A."/>
            <person name="Kraut J."/>
        </authorList>
    </citation>
    <scope>CRYSTALLIZATION</scope>
</reference>
<gene>
    <name type="primary">cycA</name>
</gene>
<keyword id="KW-0002">3D-structure</keyword>
<keyword id="KW-0903">Direct protein sequencing</keyword>
<keyword id="KW-0249">Electron transport</keyword>
<keyword id="KW-0349">Heme</keyword>
<keyword id="KW-0408">Iron</keyword>
<keyword id="KW-0479">Metal-binding</keyword>
<keyword id="KW-0602">Photosynthesis</keyword>
<keyword id="KW-0813">Transport</keyword>
<name>CYC2_RHORU</name>
<organism>
    <name type="scientific">Rhodospirillum rubrum</name>
    <dbReference type="NCBI Taxonomy" id="1085"/>
    <lineage>
        <taxon>Bacteria</taxon>
        <taxon>Pseudomonadati</taxon>
        <taxon>Pseudomonadota</taxon>
        <taxon>Alphaproteobacteria</taxon>
        <taxon>Rhodospirillales</taxon>
        <taxon>Rhodospirillaceae</taxon>
        <taxon>Rhodospirillum</taxon>
    </lineage>
</organism>
<accession>P0C189</accession>
<accession>P00092</accession>
<sequence length="112" mass="12242">EGDAAAGEKVSKKCLACHTFDQGGANKVGPNLFGVFENTAAHKDNYAYSESYTEMKAKGLTWTEANLAAYVKNPKAFVLEKSGDPKAKSKMTFKLTKDDEIENVIAYLKTLK</sequence>
<protein>
    <recommendedName>
        <fullName>Cytochrome c2</fullName>
    </recommendedName>
</protein>
<feature type="chain" id="PRO_0000006498" description="Cytochrome c2">
    <location>
        <begin position="1"/>
        <end position="112"/>
    </location>
</feature>
<feature type="binding site" description="covalent">
    <location>
        <position position="14"/>
    </location>
    <ligand>
        <name>heme c</name>
        <dbReference type="ChEBI" id="CHEBI:61717"/>
    </ligand>
</feature>
<feature type="binding site" description="covalent">
    <location>
        <position position="17"/>
    </location>
    <ligand>
        <name>heme c</name>
        <dbReference type="ChEBI" id="CHEBI:61717"/>
    </ligand>
</feature>
<feature type="binding site" description="axial binding residue">
    <location>
        <position position="18"/>
    </location>
    <ligand>
        <name>heme c</name>
        <dbReference type="ChEBI" id="CHEBI:61717"/>
    </ligand>
    <ligandPart>
        <name>Fe</name>
        <dbReference type="ChEBI" id="CHEBI:18248"/>
    </ligandPart>
</feature>
<feature type="binding site" description="axial binding residue">
    <location>
        <position position="91"/>
    </location>
    <ligand>
        <name>heme c</name>
        <dbReference type="ChEBI" id="CHEBI:61717"/>
    </ligand>
    <ligandPart>
        <name>Fe</name>
        <dbReference type="ChEBI" id="CHEBI:18248"/>
    </ligandPart>
</feature>
<feature type="helix" evidence="2">
    <location>
        <begin position="4"/>
        <end position="10"/>
    </location>
</feature>
<feature type="helix" evidence="2">
    <location>
        <begin position="11"/>
        <end position="14"/>
    </location>
</feature>
<feature type="turn" evidence="2">
    <location>
        <begin position="15"/>
        <end position="17"/>
    </location>
</feature>
<feature type="strand" evidence="2">
    <location>
        <begin position="27"/>
        <end position="29"/>
    </location>
</feature>
<feature type="strand" evidence="2">
    <location>
        <begin position="38"/>
        <end position="41"/>
    </location>
</feature>
<feature type="helix" evidence="2">
    <location>
        <begin position="50"/>
        <end position="57"/>
    </location>
</feature>
<feature type="helix" evidence="2">
    <location>
        <begin position="64"/>
        <end position="72"/>
    </location>
</feature>
<feature type="helix" evidence="2">
    <location>
        <begin position="74"/>
        <end position="82"/>
    </location>
</feature>
<feature type="helix" evidence="2">
    <location>
        <begin position="98"/>
        <end position="108"/>
    </location>
</feature>
<evidence type="ECO:0000305" key="1"/>
<evidence type="ECO:0007829" key="2">
    <source>
        <dbReference type="PDB" id="3C2C"/>
    </source>
</evidence>
<proteinExistence type="evidence at protein level"/>
<dbReference type="PIR" id="S08213">
    <property type="entry name" value="CCQF2R"/>
</dbReference>
<dbReference type="PDB" id="2C2C">
    <property type="method" value="X-ray"/>
    <property type="resolution" value="2.00 A"/>
    <property type="chains" value="A=1-112"/>
</dbReference>
<dbReference type="PDB" id="3C2C">
    <property type="method" value="X-ray"/>
    <property type="resolution" value="1.68 A"/>
    <property type="chains" value="A=1-112"/>
</dbReference>
<dbReference type="PDBsum" id="2C2C"/>
<dbReference type="PDBsum" id="3C2C"/>
<dbReference type="BMRB" id="P0C189"/>
<dbReference type="SMR" id="P0C189"/>
<dbReference type="EvolutionaryTrace" id="P0C189"/>
<dbReference type="GO" id="GO:0009055">
    <property type="term" value="F:electron transfer activity"/>
    <property type="evidence" value="ECO:0007669"/>
    <property type="project" value="InterPro"/>
</dbReference>
<dbReference type="GO" id="GO:0020037">
    <property type="term" value="F:heme binding"/>
    <property type="evidence" value="ECO:0007669"/>
    <property type="project" value="InterPro"/>
</dbReference>
<dbReference type="GO" id="GO:0046872">
    <property type="term" value="F:metal ion binding"/>
    <property type="evidence" value="ECO:0007669"/>
    <property type="project" value="UniProtKB-KW"/>
</dbReference>
<dbReference type="GO" id="GO:0015979">
    <property type="term" value="P:photosynthesis"/>
    <property type="evidence" value="ECO:0007669"/>
    <property type="project" value="UniProtKB-KW"/>
</dbReference>
<dbReference type="FunFam" id="1.10.760.10:FF:000044">
    <property type="entry name" value="Cytochrome c2"/>
    <property type="match status" value="1"/>
</dbReference>
<dbReference type="Gene3D" id="1.10.760.10">
    <property type="entry name" value="Cytochrome c-like domain"/>
    <property type="match status" value="1"/>
</dbReference>
<dbReference type="InterPro" id="IPR009056">
    <property type="entry name" value="Cyt_c-like_dom"/>
</dbReference>
<dbReference type="InterPro" id="IPR036909">
    <property type="entry name" value="Cyt_c-like_dom_sf"/>
</dbReference>
<dbReference type="InterPro" id="IPR002327">
    <property type="entry name" value="Cyt_c_1A/1B"/>
</dbReference>
<dbReference type="PANTHER" id="PTHR11961">
    <property type="entry name" value="CYTOCHROME C"/>
    <property type="match status" value="1"/>
</dbReference>
<dbReference type="Pfam" id="PF00034">
    <property type="entry name" value="Cytochrom_C"/>
    <property type="match status" value="1"/>
</dbReference>
<dbReference type="PRINTS" id="PR00604">
    <property type="entry name" value="CYTCHRMECIAB"/>
</dbReference>
<dbReference type="SUPFAM" id="SSF46626">
    <property type="entry name" value="Cytochrome c"/>
    <property type="match status" value="1"/>
</dbReference>
<dbReference type="PROSITE" id="PS51007">
    <property type="entry name" value="CYTC"/>
    <property type="match status" value="1"/>
</dbReference>